<gene>
    <name evidence="1" type="primary">trpA</name>
    <name type="ordered locus">COSY_0927</name>
</gene>
<reference key="1">
    <citation type="journal article" date="2007" name="Curr. Biol.">
        <title>Reduced genome of the thioautotrophic intracellular symbiont in a deep-sea clam, Calyptogena okutanii.</title>
        <authorList>
            <person name="Kuwahara H."/>
            <person name="Yoshida T."/>
            <person name="Takaki Y."/>
            <person name="Shimamura S."/>
            <person name="Nishi S."/>
            <person name="Harada M."/>
            <person name="Matsuyama K."/>
            <person name="Takishita K."/>
            <person name="Kawato M."/>
            <person name="Uematsu K."/>
            <person name="Fujiwara Y."/>
            <person name="Sato T."/>
            <person name="Kato C."/>
            <person name="Kitagawa M."/>
            <person name="Kato I."/>
            <person name="Maruyama T."/>
        </authorList>
    </citation>
    <scope>NUCLEOTIDE SEQUENCE [LARGE SCALE GENOMIC DNA]</scope>
    <source>
        <strain>HA</strain>
    </source>
</reference>
<comment type="function">
    <text evidence="1">The alpha subunit is responsible for the aldol cleavage of indoleglycerol phosphate to indole and glyceraldehyde 3-phosphate.</text>
</comment>
<comment type="catalytic activity">
    <reaction evidence="1">
        <text>(1S,2R)-1-C-(indol-3-yl)glycerol 3-phosphate + L-serine = D-glyceraldehyde 3-phosphate + L-tryptophan + H2O</text>
        <dbReference type="Rhea" id="RHEA:10532"/>
        <dbReference type="ChEBI" id="CHEBI:15377"/>
        <dbReference type="ChEBI" id="CHEBI:33384"/>
        <dbReference type="ChEBI" id="CHEBI:57912"/>
        <dbReference type="ChEBI" id="CHEBI:58866"/>
        <dbReference type="ChEBI" id="CHEBI:59776"/>
        <dbReference type="EC" id="4.2.1.20"/>
    </reaction>
</comment>
<comment type="pathway">
    <text evidence="1">Amino-acid biosynthesis; L-tryptophan biosynthesis; L-tryptophan from chorismate: step 5/5.</text>
</comment>
<comment type="subunit">
    <text evidence="1">Tetramer of two alpha and two beta chains.</text>
</comment>
<comment type="similarity">
    <text evidence="1">Belongs to the TrpA family.</text>
</comment>
<feature type="chain" id="PRO_1000018306" description="Tryptophan synthase alpha chain">
    <location>
        <begin position="1"/>
        <end position="265"/>
    </location>
</feature>
<feature type="active site" description="Proton acceptor" evidence="1">
    <location>
        <position position="48"/>
    </location>
</feature>
<feature type="active site" description="Proton acceptor" evidence="1">
    <location>
        <position position="59"/>
    </location>
</feature>
<proteinExistence type="inferred from homology"/>
<sequence length="265" mass="28826">MSRLSRVFFDSPKNHKVFIPFITAGDSGLDNTFELMQVLVKNGADVIELGVPFSDPMADGPVISRSYERTVKDGVSLSDVFTVVKKFRQTNNTTAIVLMGYLNPIEVFGYQPFANAASESGVDGVLVVDMPPEEAYGLKQILDGVGINFIFLVAPTTMDERLVFLATIASGFIYFVSLKGVTGAEYLDINLVKTHILRIRQVIDLPIGVGFGIKDAISAKIVSEYADAVIVGSSLVGLVERYANDRTKMLAKVGYLANEISTIIK</sequence>
<organism>
    <name type="scientific">Vesicomyosocius okutanii subsp. Calyptogena okutanii (strain HA)</name>
    <dbReference type="NCBI Taxonomy" id="412965"/>
    <lineage>
        <taxon>Bacteria</taxon>
        <taxon>Pseudomonadati</taxon>
        <taxon>Pseudomonadota</taxon>
        <taxon>Gammaproteobacteria</taxon>
        <taxon>Candidatus Pseudothioglobaceae</taxon>
        <taxon>Candidatus Vesicomyosocius</taxon>
    </lineage>
</organism>
<dbReference type="EC" id="4.2.1.20" evidence="1"/>
<dbReference type="EMBL" id="AP009247">
    <property type="protein sequence ID" value="BAF62026.1"/>
    <property type="molecule type" value="Genomic_DNA"/>
</dbReference>
<dbReference type="RefSeq" id="WP_011930295.1">
    <property type="nucleotide sequence ID" value="NC_009465.1"/>
</dbReference>
<dbReference type="SMR" id="A5CVK4"/>
<dbReference type="STRING" id="412965.COSY_0927"/>
<dbReference type="KEGG" id="vok:COSY_0927"/>
<dbReference type="eggNOG" id="COG0159">
    <property type="taxonomic scope" value="Bacteria"/>
</dbReference>
<dbReference type="HOGENOM" id="CLU_016734_0_0_6"/>
<dbReference type="OrthoDB" id="9804578at2"/>
<dbReference type="UniPathway" id="UPA00035">
    <property type="reaction ID" value="UER00044"/>
</dbReference>
<dbReference type="Proteomes" id="UP000000247">
    <property type="component" value="Chromosome"/>
</dbReference>
<dbReference type="GO" id="GO:0005829">
    <property type="term" value="C:cytosol"/>
    <property type="evidence" value="ECO:0007669"/>
    <property type="project" value="TreeGrafter"/>
</dbReference>
<dbReference type="GO" id="GO:0004834">
    <property type="term" value="F:tryptophan synthase activity"/>
    <property type="evidence" value="ECO:0007669"/>
    <property type="project" value="UniProtKB-UniRule"/>
</dbReference>
<dbReference type="CDD" id="cd04724">
    <property type="entry name" value="Tryptophan_synthase_alpha"/>
    <property type="match status" value="1"/>
</dbReference>
<dbReference type="FunFam" id="3.20.20.70:FF:000037">
    <property type="entry name" value="Tryptophan synthase alpha chain"/>
    <property type="match status" value="1"/>
</dbReference>
<dbReference type="Gene3D" id="3.20.20.70">
    <property type="entry name" value="Aldolase class I"/>
    <property type="match status" value="1"/>
</dbReference>
<dbReference type="HAMAP" id="MF_00131">
    <property type="entry name" value="Trp_synth_alpha"/>
    <property type="match status" value="1"/>
</dbReference>
<dbReference type="InterPro" id="IPR013785">
    <property type="entry name" value="Aldolase_TIM"/>
</dbReference>
<dbReference type="InterPro" id="IPR011060">
    <property type="entry name" value="RibuloseP-bd_barrel"/>
</dbReference>
<dbReference type="InterPro" id="IPR018204">
    <property type="entry name" value="Trp_synthase_alpha_AS"/>
</dbReference>
<dbReference type="InterPro" id="IPR002028">
    <property type="entry name" value="Trp_synthase_suA"/>
</dbReference>
<dbReference type="NCBIfam" id="TIGR00262">
    <property type="entry name" value="trpA"/>
    <property type="match status" value="1"/>
</dbReference>
<dbReference type="PANTHER" id="PTHR43406:SF1">
    <property type="entry name" value="TRYPTOPHAN SYNTHASE ALPHA CHAIN, CHLOROPLASTIC"/>
    <property type="match status" value="1"/>
</dbReference>
<dbReference type="PANTHER" id="PTHR43406">
    <property type="entry name" value="TRYPTOPHAN SYNTHASE, ALPHA CHAIN"/>
    <property type="match status" value="1"/>
</dbReference>
<dbReference type="Pfam" id="PF00290">
    <property type="entry name" value="Trp_syntA"/>
    <property type="match status" value="1"/>
</dbReference>
<dbReference type="SUPFAM" id="SSF51366">
    <property type="entry name" value="Ribulose-phoshate binding barrel"/>
    <property type="match status" value="1"/>
</dbReference>
<dbReference type="PROSITE" id="PS00167">
    <property type="entry name" value="TRP_SYNTHASE_ALPHA"/>
    <property type="match status" value="1"/>
</dbReference>
<accession>A5CVK4</accession>
<protein>
    <recommendedName>
        <fullName evidence="1">Tryptophan synthase alpha chain</fullName>
        <ecNumber evidence="1">4.2.1.20</ecNumber>
    </recommendedName>
</protein>
<keyword id="KW-0028">Amino-acid biosynthesis</keyword>
<keyword id="KW-0057">Aromatic amino acid biosynthesis</keyword>
<keyword id="KW-0456">Lyase</keyword>
<keyword id="KW-1185">Reference proteome</keyword>
<keyword id="KW-0822">Tryptophan biosynthesis</keyword>
<evidence type="ECO:0000255" key="1">
    <source>
        <dbReference type="HAMAP-Rule" id="MF_00131"/>
    </source>
</evidence>
<name>TRPA_VESOH</name>